<dbReference type="EMBL" id="CP000447">
    <property type="protein sequence ID" value="ABI73592.1"/>
    <property type="molecule type" value="Genomic_DNA"/>
</dbReference>
<dbReference type="RefSeq" id="WP_011639180.1">
    <property type="nucleotide sequence ID" value="NC_008345.1"/>
</dbReference>
<dbReference type="SMR" id="Q07WM2"/>
<dbReference type="STRING" id="318167.Sfri_3765"/>
<dbReference type="KEGG" id="sfr:Sfri_3765"/>
<dbReference type="eggNOG" id="COG1220">
    <property type="taxonomic scope" value="Bacteria"/>
</dbReference>
<dbReference type="HOGENOM" id="CLU_033123_0_0_6"/>
<dbReference type="OrthoDB" id="9804062at2"/>
<dbReference type="Proteomes" id="UP000000684">
    <property type="component" value="Chromosome"/>
</dbReference>
<dbReference type="GO" id="GO:0009376">
    <property type="term" value="C:HslUV protease complex"/>
    <property type="evidence" value="ECO:0007669"/>
    <property type="project" value="UniProtKB-UniRule"/>
</dbReference>
<dbReference type="GO" id="GO:0005524">
    <property type="term" value="F:ATP binding"/>
    <property type="evidence" value="ECO:0007669"/>
    <property type="project" value="UniProtKB-UniRule"/>
</dbReference>
<dbReference type="GO" id="GO:0016887">
    <property type="term" value="F:ATP hydrolysis activity"/>
    <property type="evidence" value="ECO:0007669"/>
    <property type="project" value="InterPro"/>
</dbReference>
<dbReference type="GO" id="GO:0008233">
    <property type="term" value="F:peptidase activity"/>
    <property type="evidence" value="ECO:0007669"/>
    <property type="project" value="InterPro"/>
</dbReference>
<dbReference type="GO" id="GO:0036402">
    <property type="term" value="F:proteasome-activating activity"/>
    <property type="evidence" value="ECO:0007669"/>
    <property type="project" value="UniProtKB-UniRule"/>
</dbReference>
<dbReference type="GO" id="GO:0043335">
    <property type="term" value="P:protein unfolding"/>
    <property type="evidence" value="ECO:0007669"/>
    <property type="project" value="UniProtKB-UniRule"/>
</dbReference>
<dbReference type="GO" id="GO:0051603">
    <property type="term" value="P:proteolysis involved in protein catabolic process"/>
    <property type="evidence" value="ECO:0007669"/>
    <property type="project" value="TreeGrafter"/>
</dbReference>
<dbReference type="CDD" id="cd19498">
    <property type="entry name" value="RecA-like_HslU"/>
    <property type="match status" value="1"/>
</dbReference>
<dbReference type="FunFam" id="1.10.8.10:FF:000028">
    <property type="entry name" value="ATP-dependent protease ATPase subunit HslU"/>
    <property type="match status" value="1"/>
</dbReference>
<dbReference type="FunFam" id="1.10.8.60:FF:000027">
    <property type="entry name" value="ATP-dependent protease ATPase subunit HslU"/>
    <property type="match status" value="1"/>
</dbReference>
<dbReference type="FunFam" id="3.40.50.300:FF:000213">
    <property type="entry name" value="ATP-dependent protease ATPase subunit HslU"/>
    <property type="match status" value="1"/>
</dbReference>
<dbReference type="FunFam" id="3.40.50.300:FF:000220">
    <property type="entry name" value="ATP-dependent protease ATPase subunit HslU"/>
    <property type="match status" value="1"/>
</dbReference>
<dbReference type="Gene3D" id="1.10.8.60">
    <property type="match status" value="1"/>
</dbReference>
<dbReference type="Gene3D" id="1.10.8.10">
    <property type="entry name" value="DNA helicase RuvA subunit, C-terminal domain"/>
    <property type="match status" value="1"/>
</dbReference>
<dbReference type="Gene3D" id="3.40.50.300">
    <property type="entry name" value="P-loop containing nucleotide triphosphate hydrolases"/>
    <property type="match status" value="2"/>
</dbReference>
<dbReference type="HAMAP" id="MF_00249">
    <property type="entry name" value="HslU"/>
    <property type="match status" value="1"/>
</dbReference>
<dbReference type="InterPro" id="IPR003593">
    <property type="entry name" value="AAA+_ATPase"/>
</dbReference>
<dbReference type="InterPro" id="IPR050052">
    <property type="entry name" value="ATP-dep_Clp_protease_ClpX"/>
</dbReference>
<dbReference type="InterPro" id="IPR003959">
    <property type="entry name" value="ATPase_AAA_core"/>
</dbReference>
<dbReference type="InterPro" id="IPR019489">
    <property type="entry name" value="Clp_ATPase_C"/>
</dbReference>
<dbReference type="InterPro" id="IPR004491">
    <property type="entry name" value="HslU"/>
</dbReference>
<dbReference type="InterPro" id="IPR027417">
    <property type="entry name" value="P-loop_NTPase"/>
</dbReference>
<dbReference type="NCBIfam" id="TIGR00390">
    <property type="entry name" value="hslU"/>
    <property type="match status" value="1"/>
</dbReference>
<dbReference type="NCBIfam" id="NF003544">
    <property type="entry name" value="PRK05201.1"/>
    <property type="match status" value="1"/>
</dbReference>
<dbReference type="PANTHER" id="PTHR48102">
    <property type="entry name" value="ATP-DEPENDENT CLP PROTEASE ATP-BINDING SUBUNIT CLPX-LIKE, MITOCHONDRIAL-RELATED"/>
    <property type="match status" value="1"/>
</dbReference>
<dbReference type="PANTHER" id="PTHR48102:SF3">
    <property type="entry name" value="ATP-DEPENDENT PROTEASE ATPASE SUBUNIT HSLU"/>
    <property type="match status" value="1"/>
</dbReference>
<dbReference type="Pfam" id="PF00004">
    <property type="entry name" value="AAA"/>
    <property type="match status" value="1"/>
</dbReference>
<dbReference type="Pfam" id="PF07724">
    <property type="entry name" value="AAA_2"/>
    <property type="match status" value="1"/>
</dbReference>
<dbReference type="SMART" id="SM00382">
    <property type="entry name" value="AAA"/>
    <property type="match status" value="1"/>
</dbReference>
<dbReference type="SMART" id="SM01086">
    <property type="entry name" value="ClpB_D2-small"/>
    <property type="match status" value="1"/>
</dbReference>
<dbReference type="SUPFAM" id="SSF52540">
    <property type="entry name" value="P-loop containing nucleoside triphosphate hydrolases"/>
    <property type="match status" value="1"/>
</dbReference>
<accession>Q07WM2</accession>
<gene>
    <name evidence="1" type="primary">hslU</name>
    <name type="ordered locus">Sfri_3765</name>
</gene>
<proteinExistence type="inferred from homology"/>
<protein>
    <recommendedName>
        <fullName evidence="1">ATP-dependent protease ATPase subunit HslU</fullName>
    </recommendedName>
    <alternativeName>
        <fullName evidence="1">Unfoldase HslU</fullName>
    </alternativeName>
</protein>
<reference key="1">
    <citation type="submission" date="2006-08" db="EMBL/GenBank/DDBJ databases">
        <title>Complete sequence of Shewanella frigidimarina NCIMB 400.</title>
        <authorList>
            <consortium name="US DOE Joint Genome Institute"/>
            <person name="Copeland A."/>
            <person name="Lucas S."/>
            <person name="Lapidus A."/>
            <person name="Barry K."/>
            <person name="Detter J.C."/>
            <person name="Glavina del Rio T."/>
            <person name="Hammon N."/>
            <person name="Israni S."/>
            <person name="Dalin E."/>
            <person name="Tice H."/>
            <person name="Pitluck S."/>
            <person name="Fredrickson J.K."/>
            <person name="Kolker E."/>
            <person name="McCuel L.A."/>
            <person name="DiChristina T."/>
            <person name="Nealson K.H."/>
            <person name="Newman D."/>
            <person name="Tiedje J.M."/>
            <person name="Zhou J."/>
            <person name="Romine M.F."/>
            <person name="Culley D.E."/>
            <person name="Serres M."/>
            <person name="Chertkov O."/>
            <person name="Brettin T."/>
            <person name="Bruce D."/>
            <person name="Han C."/>
            <person name="Tapia R."/>
            <person name="Gilna P."/>
            <person name="Schmutz J."/>
            <person name="Larimer F."/>
            <person name="Land M."/>
            <person name="Hauser L."/>
            <person name="Kyrpides N."/>
            <person name="Mikhailova N."/>
            <person name="Richardson P."/>
        </authorList>
    </citation>
    <scope>NUCLEOTIDE SEQUENCE [LARGE SCALE GENOMIC DNA]</scope>
    <source>
        <strain>NCIMB 400</strain>
    </source>
</reference>
<feature type="chain" id="PRO_1000012803" description="ATP-dependent protease ATPase subunit HslU">
    <location>
        <begin position="1"/>
        <end position="441"/>
    </location>
</feature>
<feature type="binding site" evidence="1">
    <location>
        <position position="18"/>
    </location>
    <ligand>
        <name>ATP</name>
        <dbReference type="ChEBI" id="CHEBI:30616"/>
    </ligand>
</feature>
<feature type="binding site" evidence="1">
    <location>
        <begin position="60"/>
        <end position="65"/>
    </location>
    <ligand>
        <name>ATP</name>
        <dbReference type="ChEBI" id="CHEBI:30616"/>
    </ligand>
</feature>
<feature type="binding site" evidence="1">
    <location>
        <position position="254"/>
    </location>
    <ligand>
        <name>ATP</name>
        <dbReference type="ChEBI" id="CHEBI:30616"/>
    </ligand>
</feature>
<feature type="binding site" evidence="1">
    <location>
        <position position="319"/>
    </location>
    <ligand>
        <name>ATP</name>
        <dbReference type="ChEBI" id="CHEBI:30616"/>
    </ligand>
</feature>
<feature type="binding site" evidence="1">
    <location>
        <position position="391"/>
    </location>
    <ligand>
        <name>ATP</name>
        <dbReference type="ChEBI" id="CHEBI:30616"/>
    </ligand>
</feature>
<comment type="function">
    <text evidence="1">ATPase subunit of a proteasome-like degradation complex; this subunit has chaperone activity. The binding of ATP and its subsequent hydrolysis by HslU are essential for unfolding of protein substrates subsequently hydrolyzed by HslV. HslU recognizes the N-terminal part of its protein substrates and unfolds these before they are guided to HslV for hydrolysis.</text>
</comment>
<comment type="subunit">
    <text evidence="1">A double ring-shaped homohexamer of HslV is capped on each side by a ring-shaped HslU homohexamer. The assembly of the HslU/HslV complex is dependent on binding of ATP.</text>
</comment>
<comment type="subcellular location">
    <subcellularLocation>
        <location evidence="1">Cytoplasm</location>
    </subcellularLocation>
</comment>
<comment type="similarity">
    <text evidence="1">Belongs to the ClpX chaperone family. HslU subfamily.</text>
</comment>
<keyword id="KW-0067">ATP-binding</keyword>
<keyword id="KW-0143">Chaperone</keyword>
<keyword id="KW-0963">Cytoplasm</keyword>
<keyword id="KW-0547">Nucleotide-binding</keyword>
<keyword id="KW-1185">Reference proteome</keyword>
<keyword id="KW-0346">Stress response</keyword>
<evidence type="ECO:0000255" key="1">
    <source>
        <dbReference type="HAMAP-Rule" id="MF_00249"/>
    </source>
</evidence>
<sequence>MSEMTPREIVHELDAHIIGQQNAKRSVAVALRNRWRRMQLEPELRHEVTPKNILMIGPTGVGKTEIARRLAKLANAPFIKVEATKFTEVGYVGKEVEQIIRDLTDSAVKMTREQQMKKCRHRAEEMAEERILDALLPKPKDDWDTDQKDDSTTRQVFRKKLREGQLDDKEIEIDVAAPQVGVEIMAPPGMEEMTNQLQGLFQNLGQSTSKRKKLKIKDAYKQLVEDEAAKLVNQEDLKEQAIELVEQNGIVFLDEIDKICKRGESSGPDVSREGVQRDLLPLVEGCTVSTKHGMVKTDHILFIASGAFQMSKPSDLIPELQGRLPIRVELDALTAADFKRILTEPFASLTEQHVALMNTEGVTIEFTESGIERIAEAAWQVNERTENIGARRLHTVMEKLMEEISYDASEKSGSKFVIDAEYVNDHLDTLVQDEDLSRFIL</sequence>
<organism>
    <name type="scientific">Shewanella frigidimarina (strain NCIMB 400)</name>
    <dbReference type="NCBI Taxonomy" id="318167"/>
    <lineage>
        <taxon>Bacteria</taxon>
        <taxon>Pseudomonadati</taxon>
        <taxon>Pseudomonadota</taxon>
        <taxon>Gammaproteobacteria</taxon>
        <taxon>Alteromonadales</taxon>
        <taxon>Shewanellaceae</taxon>
        <taxon>Shewanella</taxon>
    </lineage>
</organism>
<name>HSLU_SHEFN</name>